<gene>
    <name evidence="1" type="primary">cysS</name>
    <name type="ordered locus">VSAL_I1940</name>
</gene>
<comment type="catalytic activity">
    <reaction evidence="1">
        <text>tRNA(Cys) + L-cysteine + ATP = L-cysteinyl-tRNA(Cys) + AMP + diphosphate</text>
        <dbReference type="Rhea" id="RHEA:17773"/>
        <dbReference type="Rhea" id="RHEA-COMP:9661"/>
        <dbReference type="Rhea" id="RHEA-COMP:9679"/>
        <dbReference type="ChEBI" id="CHEBI:30616"/>
        <dbReference type="ChEBI" id="CHEBI:33019"/>
        <dbReference type="ChEBI" id="CHEBI:35235"/>
        <dbReference type="ChEBI" id="CHEBI:78442"/>
        <dbReference type="ChEBI" id="CHEBI:78517"/>
        <dbReference type="ChEBI" id="CHEBI:456215"/>
        <dbReference type="EC" id="6.1.1.16"/>
    </reaction>
</comment>
<comment type="cofactor">
    <cofactor evidence="1">
        <name>Zn(2+)</name>
        <dbReference type="ChEBI" id="CHEBI:29105"/>
    </cofactor>
    <text evidence="1">Binds 1 zinc ion per subunit.</text>
</comment>
<comment type="subunit">
    <text evidence="1">Monomer.</text>
</comment>
<comment type="subcellular location">
    <subcellularLocation>
        <location evidence="1">Cytoplasm</location>
    </subcellularLocation>
</comment>
<comment type="similarity">
    <text evidence="1">Belongs to the class-I aminoacyl-tRNA synthetase family.</text>
</comment>
<reference key="1">
    <citation type="journal article" date="2008" name="BMC Genomics">
        <title>The genome sequence of the fish pathogen Aliivibrio salmonicida strain LFI1238 shows extensive evidence of gene decay.</title>
        <authorList>
            <person name="Hjerde E."/>
            <person name="Lorentzen M.S."/>
            <person name="Holden M.T."/>
            <person name="Seeger K."/>
            <person name="Paulsen S."/>
            <person name="Bason N."/>
            <person name="Churcher C."/>
            <person name="Harris D."/>
            <person name="Norbertczak H."/>
            <person name="Quail M.A."/>
            <person name="Sanders S."/>
            <person name="Thurston S."/>
            <person name="Parkhill J."/>
            <person name="Willassen N.P."/>
            <person name="Thomson N.R."/>
        </authorList>
    </citation>
    <scope>NUCLEOTIDE SEQUENCE [LARGE SCALE GENOMIC DNA]</scope>
    <source>
        <strain>LFI1238</strain>
    </source>
</reference>
<feature type="chain" id="PRO_1000090814" description="Cysteine--tRNA ligase">
    <location>
        <begin position="1"/>
        <end position="462"/>
    </location>
</feature>
<feature type="short sequence motif" description="'HIGH' region">
    <location>
        <begin position="30"/>
        <end position="40"/>
    </location>
</feature>
<feature type="short sequence motif" description="'KMSKS' region">
    <location>
        <begin position="268"/>
        <end position="272"/>
    </location>
</feature>
<feature type="binding site" evidence="1">
    <location>
        <position position="28"/>
    </location>
    <ligand>
        <name>Zn(2+)</name>
        <dbReference type="ChEBI" id="CHEBI:29105"/>
    </ligand>
</feature>
<feature type="binding site" evidence="1">
    <location>
        <position position="211"/>
    </location>
    <ligand>
        <name>Zn(2+)</name>
        <dbReference type="ChEBI" id="CHEBI:29105"/>
    </ligand>
</feature>
<feature type="binding site" evidence="1">
    <location>
        <position position="236"/>
    </location>
    <ligand>
        <name>Zn(2+)</name>
        <dbReference type="ChEBI" id="CHEBI:29105"/>
    </ligand>
</feature>
<feature type="binding site" evidence="1">
    <location>
        <position position="240"/>
    </location>
    <ligand>
        <name>Zn(2+)</name>
        <dbReference type="ChEBI" id="CHEBI:29105"/>
    </ligand>
</feature>
<feature type="binding site" evidence="1">
    <location>
        <position position="271"/>
    </location>
    <ligand>
        <name>ATP</name>
        <dbReference type="ChEBI" id="CHEBI:30616"/>
    </ligand>
</feature>
<dbReference type="EC" id="6.1.1.16" evidence="1"/>
<dbReference type="EMBL" id="FM178379">
    <property type="protein sequence ID" value="CAQ79625.1"/>
    <property type="molecule type" value="Genomic_DNA"/>
</dbReference>
<dbReference type="RefSeq" id="WP_012550507.1">
    <property type="nucleotide sequence ID" value="NC_011312.1"/>
</dbReference>
<dbReference type="SMR" id="B6EH43"/>
<dbReference type="KEGG" id="vsa:VSAL_I1940"/>
<dbReference type="eggNOG" id="COG0215">
    <property type="taxonomic scope" value="Bacteria"/>
</dbReference>
<dbReference type="HOGENOM" id="CLU_013528_0_1_6"/>
<dbReference type="Proteomes" id="UP000001730">
    <property type="component" value="Chromosome 1"/>
</dbReference>
<dbReference type="GO" id="GO:0005829">
    <property type="term" value="C:cytosol"/>
    <property type="evidence" value="ECO:0007669"/>
    <property type="project" value="TreeGrafter"/>
</dbReference>
<dbReference type="GO" id="GO:0005524">
    <property type="term" value="F:ATP binding"/>
    <property type="evidence" value="ECO:0007669"/>
    <property type="project" value="UniProtKB-UniRule"/>
</dbReference>
<dbReference type="GO" id="GO:0004817">
    <property type="term" value="F:cysteine-tRNA ligase activity"/>
    <property type="evidence" value="ECO:0007669"/>
    <property type="project" value="UniProtKB-UniRule"/>
</dbReference>
<dbReference type="GO" id="GO:0008270">
    <property type="term" value="F:zinc ion binding"/>
    <property type="evidence" value="ECO:0007669"/>
    <property type="project" value="UniProtKB-UniRule"/>
</dbReference>
<dbReference type="GO" id="GO:0006423">
    <property type="term" value="P:cysteinyl-tRNA aminoacylation"/>
    <property type="evidence" value="ECO:0007669"/>
    <property type="project" value="UniProtKB-UniRule"/>
</dbReference>
<dbReference type="CDD" id="cd07963">
    <property type="entry name" value="Anticodon_Ia_Cys"/>
    <property type="match status" value="1"/>
</dbReference>
<dbReference type="CDD" id="cd00672">
    <property type="entry name" value="CysRS_core"/>
    <property type="match status" value="1"/>
</dbReference>
<dbReference type="FunFam" id="1.20.120.1910:FF:000001">
    <property type="entry name" value="Cysteine--tRNA ligase"/>
    <property type="match status" value="1"/>
</dbReference>
<dbReference type="FunFam" id="3.40.50.620:FF:000009">
    <property type="entry name" value="Cysteine--tRNA ligase"/>
    <property type="match status" value="1"/>
</dbReference>
<dbReference type="Gene3D" id="1.20.120.1910">
    <property type="entry name" value="Cysteine-tRNA ligase, C-terminal anti-codon recognition domain"/>
    <property type="match status" value="1"/>
</dbReference>
<dbReference type="Gene3D" id="3.40.50.620">
    <property type="entry name" value="HUPs"/>
    <property type="match status" value="1"/>
</dbReference>
<dbReference type="HAMAP" id="MF_00041">
    <property type="entry name" value="Cys_tRNA_synth"/>
    <property type="match status" value="1"/>
</dbReference>
<dbReference type="InterPro" id="IPR015803">
    <property type="entry name" value="Cys-tRNA-ligase"/>
</dbReference>
<dbReference type="InterPro" id="IPR015273">
    <property type="entry name" value="Cys-tRNA-synt_Ia_DALR"/>
</dbReference>
<dbReference type="InterPro" id="IPR024909">
    <property type="entry name" value="Cys-tRNA/MSH_ligase"/>
</dbReference>
<dbReference type="InterPro" id="IPR056411">
    <property type="entry name" value="CysS_C"/>
</dbReference>
<dbReference type="InterPro" id="IPR014729">
    <property type="entry name" value="Rossmann-like_a/b/a_fold"/>
</dbReference>
<dbReference type="InterPro" id="IPR032678">
    <property type="entry name" value="tRNA-synt_1_cat_dom"/>
</dbReference>
<dbReference type="InterPro" id="IPR009080">
    <property type="entry name" value="tRNAsynth_Ia_anticodon-bd"/>
</dbReference>
<dbReference type="NCBIfam" id="TIGR00435">
    <property type="entry name" value="cysS"/>
    <property type="match status" value="1"/>
</dbReference>
<dbReference type="PANTHER" id="PTHR10890:SF3">
    <property type="entry name" value="CYSTEINE--TRNA LIGASE, CYTOPLASMIC"/>
    <property type="match status" value="1"/>
</dbReference>
<dbReference type="PANTHER" id="PTHR10890">
    <property type="entry name" value="CYSTEINYL-TRNA SYNTHETASE"/>
    <property type="match status" value="1"/>
</dbReference>
<dbReference type="Pfam" id="PF23493">
    <property type="entry name" value="CysS_C"/>
    <property type="match status" value="1"/>
</dbReference>
<dbReference type="Pfam" id="PF09190">
    <property type="entry name" value="DALR_2"/>
    <property type="match status" value="1"/>
</dbReference>
<dbReference type="Pfam" id="PF01406">
    <property type="entry name" value="tRNA-synt_1e"/>
    <property type="match status" value="1"/>
</dbReference>
<dbReference type="PRINTS" id="PR00983">
    <property type="entry name" value="TRNASYNTHCYS"/>
</dbReference>
<dbReference type="SMART" id="SM00840">
    <property type="entry name" value="DALR_2"/>
    <property type="match status" value="1"/>
</dbReference>
<dbReference type="SUPFAM" id="SSF47323">
    <property type="entry name" value="Anticodon-binding domain of a subclass of class I aminoacyl-tRNA synthetases"/>
    <property type="match status" value="1"/>
</dbReference>
<dbReference type="SUPFAM" id="SSF52374">
    <property type="entry name" value="Nucleotidylyl transferase"/>
    <property type="match status" value="1"/>
</dbReference>
<proteinExistence type="inferred from homology"/>
<protein>
    <recommendedName>
        <fullName evidence="1">Cysteine--tRNA ligase</fullName>
        <ecNumber evidence="1">6.1.1.16</ecNumber>
    </recommendedName>
    <alternativeName>
        <fullName evidence="1">Cysteinyl-tRNA synthetase</fullName>
        <shortName evidence="1">CysRS</shortName>
    </alternativeName>
</protein>
<sequence length="462" mass="52334">MLKIYNSLTRQKEEFKPITEGKVGMYVCGVTIYDLCHIGHGRTFVSFDVISRYLRFLGYDLTFVRNITDIDDKIIKRAAENNESCEALTERLIAEMHADFDALKMKRPDVEPRATEYITEIVELVERLIERGFAYVASNGDVMFEVKKFDEYGRLSRQDLEQLQAGSRVTLEETSVKRSGMDFVLWKMSKPGEPTWESPWGPGRPGWHIECSAMNSSILGNHFDIHGGGSDLMFPHHENEIAQSCCAHDAKYVNTWMHSGMVMIDREKMSKSLGNFFTIRDVLAHYDSETVRYFLMSGHYRSQLNYSEENLNQARSSLERLYTSLRGLDLTVTPAGGETFVTRFSTAMNDDFNTPEAYSVLFEMAREVNRLKTENIEAASKLGALMRELAEVLGLLSQEPEAFLQGDSGSDNEVAEIEALIKARNDARAAKDWSAADAARDAITALNIVLEDGPEGTTWRRK</sequence>
<evidence type="ECO:0000255" key="1">
    <source>
        <dbReference type="HAMAP-Rule" id="MF_00041"/>
    </source>
</evidence>
<name>SYC_ALISL</name>
<organism>
    <name type="scientific">Aliivibrio salmonicida (strain LFI1238)</name>
    <name type="common">Vibrio salmonicida (strain LFI1238)</name>
    <dbReference type="NCBI Taxonomy" id="316275"/>
    <lineage>
        <taxon>Bacteria</taxon>
        <taxon>Pseudomonadati</taxon>
        <taxon>Pseudomonadota</taxon>
        <taxon>Gammaproteobacteria</taxon>
        <taxon>Vibrionales</taxon>
        <taxon>Vibrionaceae</taxon>
        <taxon>Aliivibrio</taxon>
    </lineage>
</organism>
<accession>B6EH43</accession>
<keyword id="KW-0030">Aminoacyl-tRNA synthetase</keyword>
<keyword id="KW-0067">ATP-binding</keyword>
<keyword id="KW-0963">Cytoplasm</keyword>
<keyword id="KW-0436">Ligase</keyword>
<keyword id="KW-0479">Metal-binding</keyword>
<keyword id="KW-0547">Nucleotide-binding</keyword>
<keyword id="KW-0648">Protein biosynthesis</keyword>
<keyword id="KW-0862">Zinc</keyword>